<gene>
    <name type="primary">KRTAP10-11</name>
    <name type="synonym">KAP10.11</name>
    <name type="synonym">KAP18-11</name>
    <name type="synonym">KRTAP10.11</name>
    <name type="synonym">KRTAP18-11</name>
    <name type="synonym">KRTAP18.11</name>
</gene>
<protein>
    <recommendedName>
        <fullName>Keratin-associated protein 10-11</fullName>
    </recommendedName>
    <alternativeName>
        <fullName>High sulfur keratin-associated protein 10.11</fullName>
    </alternativeName>
    <alternativeName>
        <fullName>Keratin-associated protein 10.11</fullName>
    </alternativeName>
    <alternativeName>
        <fullName>Keratin-associated protein 18-11</fullName>
    </alternativeName>
    <alternativeName>
        <fullName>Keratin-associated protein 18.11</fullName>
    </alternativeName>
</protein>
<sequence length="298" mass="30243">MAASTMSVCSSAYSDSWQVDDCPESCCEPPCSAPSCCAPAPSLSLVCTPVSCVSSPCCQAACEPSACQSGCTSSCTPSCCQQSSCQPACCTSSPCQQACCVPVCCKTVCCKPVCCVPVCCGAASSCCRQSSCQPACCASSSCQPACCVPVCCKPVCCVSTCSEDSSSCCQQSSCQPACCTSSSYQQACCVPVCCKTVYCKPICCVPVCSRASSSRCQQPSCQPACCTTSCCRPSSSVSLLCHPVCRSTCCVPVSSCCAPTSSCQSSCCRPASCVSLLCRPASSRLACYSLCSGKKSSC</sequence>
<proteinExistence type="evidence at protein level"/>
<organism>
    <name type="scientific">Homo sapiens</name>
    <name type="common">Human</name>
    <dbReference type="NCBI Taxonomy" id="9606"/>
    <lineage>
        <taxon>Eukaryota</taxon>
        <taxon>Metazoa</taxon>
        <taxon>Chordata</taxon>
        <taxon>Craniata</taxon>
        <taxon>Vertebrata</taxon>
        <taxon>Euteleostomi</taxon>
        <taxon>Mammalia</taxon>
        <taxon>Eutheria</taxon>
        <taxon>Euarchontoglires</taxon>
        <taxon>Primates</taxon>
        <taxon>Haplorrhini</taxon>
        <taxon>Catarrhini</taxon>
        <taxon>Hominidae</taxon>
        <taxon>Homo</taxon>
    </lineage>
</organism>
<dbReference type="EMBL" id="AB076359">
    <property type="protein sequence ID" value="BAD01546.1"/>
    <property type="molecule type" value="mRNA"/>
</dbReference>
<dbReference type="EMBL" id="AL773602">
    <property type="status" value="NOT_ANNOTATED_CDS"/>
    <property type="molecule type" value="Genomic_DNA"/>
</dbReference>
<dbReference type="EMBL" id="BC131611">
    <property type="protein sequence ID" value="AAI31612.1"/>
    <property type="molecule type" value="mRNA"/>
</dbReference>
<dbReference type="CCDS" id="CCDS42962.1"/>
<dbReference type="RefSeq" id="NP_941965.2">
    <property type="nucleotide sequence ID" value="NM_198692.3"/>
</dbReference>
<dbReference type="BioGRID" id="132129">
    <property type="interactions" value="63"/>
</dbReference>
<dbReference type="FunCoup" id="P60412">
    <property type="interactions" value="30"/>
</dbReference>
<dbReference type="IntAct" id="P60412">
    <property type="interactions" value="38"/>
</dbReference>
<dbReference type="STRING" id="9606.ENSP00000334197"/>
<dbReference type="BioMuta" id="KRTAP10-11"/>
<dbReference type="DMDM" id="296439312"/>
<dbReference type="MassIVE" id="P60412"/>
<dbReference type="PaxDb" id="9606-ENSP00000334197"/>
<dbReference type="PeptideAtlas" id="P60412"/>
<dbReference type="DNASU" id="386678"/>
<dbReference type="Ensembl" id="ENST00000334670.9">
    <property type="protein sequence ID" value="ENSP00000334197.8"/>
    <property type="gene ID" value="ENSG00000243489.4"/>
</dbReference>
<dbReference type="GeneID" id="386678"/>
<dbReference type="KEGG" id="hsa:386678"/>
<dbReference type="MANE-Select" id="ENST00000334670.9">
    <property type="protein sequence ID" value="ENSP00000334197.8"/>
    <property type="RefSeq nucleotide sequence ID" value="NM_198692.3"/>
    <property type="RefSeq protein sequence ID" value="NP_941965.2"/>
</dbReference>
<dbReference type="UCSC" id="uc002zfr.5">
    <property type="organism name" value="human"/>
</dbReference>
<dbReference type="AGR" id="HGNC:20528"/>
<dbReference type="CTD" id="386678"/>
<dbReference type="GeneCards" id="KRTAP10-11"/>
<dbReference type="HGNC" id="HGNC:20528">
    <property type="gene designation" value="KRTAP10-11"/>
</dbReference>
<dbReference type="HPA" id="ENSG00000243489">
    <property type="expression patterns" value="Tissue enriched (skin)"/>
</dbReference>
<dbReference type="neXtProt" id="NX_P60412"/>
<dbReference type="OpenTargets" id="ENSG00000243489"/>
<dbReference type="PharmGKB" id="PA134873081"/>
<dbReference type="VEuPathDB" id="HostDB:ENSG00000243489"/>
<dbReference type="eggNOG" id="KOG4726">
    <property type="taxonomic scope" value="Eukaryota"/>
</dbReference>
<dbReference type="GeneTree" id="ENSGT00940000165026"/>
<dbReference type="InParanoid" id="P60412"/>
<dbReference type="OMA" id="RCKSVCC"/>
<dbReference type="PAN-GO" id="P60412">
    <property type="GO annotations" value="0 GO annotations based on evolutionary models"/>
</dbReference>
<dbReference type="PhylomeDB" id="P60412"/>
<dbReference type="TreeFam" id="TF351356"/>
<dbReference type="PathwayCommons" id="P60412"/>
<dbReference type="Reactome" id="R-HSA-6805567">
    <property type="pathway name" value="Keratinization"/>
</dbReference>
<dbReference type="SignaLink" id="P60412"/>
<dbReference type="BioGRID-ORCS" id="386678">
    <property type="hits" value="18 hits in 1060 CRISPR screens"/>
</dbReference>
<dbReference type="GenomeRNAi" id="386678"/>
<dbReference type="Pharos" id="P60412">
    <property type="development level" value="Tdark"/>
</dbReference>
<dbReference type="PRO" id="PR:P60412"/>
<dbReference type="Proteomes" id="UP000005640">
    <property type="component" value="Chromosome 21"/>
</dbReference>
<dbReference type="RNAct" id="P60412">
    <property type="molecule type" value="protein"/>
</dbReference>
<dbReference type="Bgee" id="ENSG00000243489">
    <property type="expression patterns" value="Expressed in zone of skin and 7 other cell types or tissues"/>
</dbReference>
<dbReference type="GO" id="GO:0005829">
    <property type="term" value="C:cytosol"/>
    <property type="evidence" value="ECO:0000304"/>
    <property type="project" value="Reactome"/>
</dbReference>
<dbReference type="GO" id="GO:0045095">
    <property type="term" value="C:keratin filament"/>
    <property type="evidence" value="ECO:0007669"/>
    <property type="project" value="InterPro"/>
</dbReference>
<dbReference type="InterPro" id="IPR002494">
    <property type="entry name" value="KAP"/>
</dbReference>
<dbReference type="PANTHER" id="PTHR23262">
    <property type="entry name" value="KERATIN ASSOCIATED PROTEIN"/>
    <property type="match status" value="1"/>
</dbReference>
<dbReference type="PANTHER" id="PTHR23262:SF50">
    <property type="entry name" value="KERATIN-ASSOCIATED PROTEIN 10-1"/>
    <property type="match status" value="1"/>
</dbReference>
<dbReference type="Pfam" id="PF13885">
    <property type="entry name" value="Keratin_B2_2"/>
    <property type="match status" value="4"/>
</dbReference>
<evidence type="ECO:0000269" key="1">
    <source>
    </source>
</evidence>
<evidence type="ECO:0000269" key="2">
    <source>
    </source>
</evidence>
<evidence type="ECO:0000305" key="3"/>
<feature type="chain" id="PRO_0000185219" description="Keratin-associated protein 10-11">
    <location>
        <begin position="1"/>
        <end position="298"/>
    </location>
</feature>
<feature type="repeat" description="1">
    <location>
        <begin position="26"/>
        <end position="30"/>
    </location>
</feature>
<feature type="repeat" description="2">
    <location>
        <begin position="36"/>
        <end position="40"/>
    </location>
</feature>
<feature type="repeat" description="3">
    <location>
        <begin position="57"/>
        <end position="61"/>
    </location>
</feature>
<feature type="repeat" description="4">
    <location>
        <begin position="79"/>
        <end position="83"/>
    </location>
</feature>
<feature type="repeat" description="5">
    <location>
        <begin position="89"/>
        <end position="93"/>
    </location>
</feature>
<feature type="repeat" description="6">
    <location>
        <begin position="99"/>
        <end position="103"/>
    </location>
</feature>
<feature type="repeat" description="7">
    <location>
        <begin position="104"/>
        <end position="108"/>
    </location>
</feature>
<feature type="repeat" description="8">
    <location>
        <begin position="109"/>
        <end position="113"/>
    </location>
</feature>
<feature type="repeat" description="9">
    <location>
        <begin position="114"/>
        <end position="118"/>
    </location>
</feature>
<feature type="repeat" description="10">
    <location>
        <begin position="119"/>
        <end position="123"/>
    </location>
</feature>
<feature type="repeat" description="11">
    <location>
        <begin position="126"/>
        <end position="130"/>
    </location>
</feature>
<feature type="repeat" description="12">
    <location>
        <begin position="136"/>
        <end position="140"/>
    </location>
</feature>
<feature type="repeat" description="13">
    <location>
        <begin position="146"/>
        <end position="150"/>
    </location>
</feature>
<feature type="repeat" description="14">
    <location>
        <begin position="151"/>
        <end position="155"/>
    </location>
</feature>
<feature type="repeat" description="15">
    <location>
        <begin position="156"/>
        <end position="160"/>
    </location>
</feature>
<feature type="repeat" description="16">
    <location>
        <begin position="168"/>
        <end position="172"/>
    </location>
</feature>
<feature type="repeat" description="17">
    <location>
        <begin position="178"/>
        <end position="182"/>
    </location>
</feature>
<feature type="repeat" description="18">
    <location>
        <begin position="188"/>
        <end position="192"/>
    </location>
</feature>
<feature type="repeat" description="19">
    <location>
        <begin position="193"/>
        <end position="197"/>
    </location>
</feature>
<feature type="repeat" description="20">
    <location>
        <begin position="203"/>
        <end position="207"/>
    </location>
</feature>
<feature type="repeat" description="21">
    <location>
        <begin position="225"/>
        <end position="229"/>
    </location>
</feature>
<feature type="repeat" description="22">
    <location>
        <begin position="230"/>
        <end position="234"/>
    </location>
</feature>
<feature type="repeat" description="23">
    <location>
        <begin position="249"/>
        <end position="253"/>
    </location>
</feature>
<feature type="repeat" description="24">
    <location>
        <begin position="256"/>
        <end position="260"/>
    </location>
</feature>
<feature type="repeat" description="25">
    <location>
        <begin position="267"/>
        <end position="271"/>
    </location>
</feature>
<feature type="region of interest" description="25 X 5 AA repeats of C-C-X(3)">
    <location>
        <begin position="26"/>
        <end position="271"/>
    </location>
</feature>
<feature type="sequence variant" id="VAR_060056" description="In dbSNP:rs4818952.">
    <original>S</original>
    <variation>F</variation>
    <location>
        <position position="130"/>
    </location>
</feature>
<feature type="sequence conflict" description="In Ref. 1; BAD01546." evidence="3" ref="1">
    <original>S</original>
    <variation>Y</variation>
    <location>
        <position position="213"/>
    </location>
</feature>
<feature type="sequence conflict" description="In Ref. 1; BAD01546 and 3; AAI31612." evidence="3" ref="1 3">
    <original>R</original>
    <variation>C</variation>
    <location>
        <position position="269"/>
    </location>
</feature>
<accession>P60412</accession>
<accession>A2RRF9</accession>
<name>KR10B_HUMAN</name>
<keyword id="KW-0416">Keratin</keyword>
<keyword id="KW-1267">Proteomics identification</keyword>
<keyword id="KW-1185">Reference proteome</keyword>
<keyword id="KW-0677">Repeat</keyword>
<reference key="1">
    <citation type="journal article" date="2004" name="Genomics">
        <title>A cluster of 21 keratin-associated protein genes within introns of another gene on human chromosome 21q22.3.</title>
        <authorList>
            <person name="Shibuya K."/>
            <person name="Obayashi I."/>
            <person name="Asakawa S."/>
            <person name="Minoshima S."/>
            <person name="Kudoh J."/>
            <person name="Shimizu N."/>
        </authorList>
    </citation>
    <scope>NUCLEOTIDE SEQUENCE [MRNA]</scope>
    <scope>TISSUE SPECIFICITY</scope>
    <source>
        <tissue>Hair root</tissue>
    </source>
</reference>
<reference key="2">
    <citation type="journal article" date="2000" name="Nature">
        <title>The DNA sequence of human chromosome 21.</title>
        <authorList>
            <person name="Hattori M."/>
            <person name="Fujiyama A."/>
            <person name="Taylor T.D."/>
            <person name="Watanabe H."/>
            <person name="Yada T."/>
            <person name="Park H.-S."/>
            <person name="Toyoda A."/>
            <person name="Ishii K."/>
            <person name="Totoki Y."/>
            <person name="Choi D.-K."/>
            <person name="Groner Y."/>
            <person name="Soeda E."/>
            <person name="Ohki M."/>
            <person name="Takagi T."/>
            <person name="Sakaki Y."/>
            <person name="Taudien S."/>
            <person name="Blechschmidt K."/>
            <person name="Polley A."/>
            <person name="Menzel U."/>
            <person name="Delabar J."/>
            <person name="Kumpf K."/>
            <person name="Lehmann R."/>
            <person name="Patterson D."/>
            <person name="Reichwald K."/>
            <person name="Rump A."/>
            <person name="Schillhabel M."/>
            <person name="Schudy A."/>
            <person name="Zimmermann W."/>
            <person name="Rosenthal A."/>
            <person name="Kudoh J."/>
            <person name="Shibuya K."/>
            <person name="Kawasaki K."/>
            <person name="Asakawa S."/>
            <person name="Shintani A."/>
            <person name="Sasaki T."/>
            <person name="Nagamine K."/>
            <person name="Mitsuyama S."/>
            <person name="Antonarakis S.E."/>
            <person name="Minoshima S."/>
            <person name="Shimizu N."/>
            <person name="Nordsiek G."/>
            <person name="Hornischer K."/>
            <person name="Brandt P."/>
            <person name="Scharfe M."/>
            <person name="Schoen O."/>
            <person name="Desario A."/>
            <person name="Reichelt J."/>
            <person name="Kauer G."/>
            <person name="Bloecker H."/>
            <person name="Ramser J."/>
            <person name="Beck A."/>
            <person name="Klages S."/>
            <person name="Hennig S."/>
            <person name="Riesselmann L."/>
            <person name="Dagand E."/>
            <person name="Wehrmeyer S."/>
            <person name="Borzym K."/>
            <person name="Gardiner K."/>
            <person name="Nizetic D."/>
            <person name="Francis F."/>
            <person name="Lehrach H."/>
            <person name="Reinhardt R."/>
            <person name="Yaspo M.-L."/>
        </authorList>
    </citation>
    <scope>NUCLEOTIDE SEQUENCE [LARGE SCALE GENOMIC DNA]</scope>
</reference>
<reference key="3">
    <citation type="journal article" date="2004" name="Genome Res.">
        <title>The status, quality, and expansion of the NIH full-length cDNA project: the Mammalian Gene Collection (MGC).</title>
        <authorList>
            <consortium name="The MGC Project Team"/>
        </authorList>
    </citation>
    <scope>NUCLEOTIDE SEQUENCE [LARGE SCALE MRNA]</scope>
</reference>
<reference key="4">
    <citation type="journal article" date="2004" name="J. Invest. Dermatol.">
        <title>Hair keratin associated proteins: characterization of a second high sulfur KAP gene domain on human chromosome 21.</title>
        <authorList>
            <person name="Rogers M.A."/>
            <person name="Langbein L."/>
            <person name="Winter H."/>
            <person name="Beckmann I."/>
            <person name="Praetzel S."/>
            <person name="Schweizer J."/>
        </authorList>
    </citation>
    <scope>TISSUE SPECIFICITY</scope>
</reference>
<comment type="function">
    <text>In the hair cortex, hair keratin intermediate filaments are embedded in an interfilamentous matrix, consisting of hair keratin-associated proteins (KRTAP), which are essential for the formation of a rigid and resistant hair shaft through their extensive disulfide bond cross-linking with abundant cysteine residues of hair keratins. The matrix proteins include the high-sulfur and high-glycine-tyrosine keratins.</text>
</comment>
<comment type="subunit">
    <text>Interacts with hair keratins.</text>
</comment>
<comment type="interaction">
    <interactant intactId="EBI-10217483">
        <id>P60412</id>
    </interactant>
    <interactant intactId="EBI-10173507">
        <id>Q6UY14-3</id>
        <label>ADAMTSL4</label>
    </interactant>
    <organismsDiffer>false</organismsDiffer>
    <experiments>3</experiments>
</comment>
<comment type="interaction">
    <interactant intactId="EBI-10217483">
        <id>P60412</id>
    </interactant>
    <interactant intactId="EBI-11954519">
        <id>Q49AR9</id>
        <label>ANKS1A</label>
    </interactant>
    <organismsDiffer>false</organismsDiffer>
    <experiments>3</experiments>
</comment>
<comment type="interaction">
    <interactant intactId="EBI-10217483">
        <id>P60412</id>
    </interactant>
    <interactant intactId="EBI-7317823">
        <id>Q6P5X5</id>
        <label>C22orf39</label>
    </interactant>
    <organismsDiffer>false</organismsDiffer>
    <experiments>3</experiments>
</comment>
<comment type="interaction">
    <interactant intactId="EBI-10217483">
        <id>P60412</id>
    </interactant>
    <interactant intactId="EBI-1058722">
        <id>Q13554</id>
        <label>CAMK2B</label>
    </interactant>
    <organismsDiffer>false</organismsDiffer>
    <experiments>3</experiments>
</comment>
<comment type="interaction">
    <interactant intactId="EBI-10217483">
        <id>P60412</id>
    </interactant>
    <interactant intactId="EBI-744545">
        <id>Q8NEC5</id>
        <label>CATSPER1</label>
    </interactant>
    <organismsDiffer>false</organismsDiffer>
    <experiments>6</experiments>
</comment>
<comment type="interaction">
    <interactant intactId="EBI-10217483">
        <id>P60412</id>
    </interactant>
    <interactant intactId="EBI-10192698">
        <id>Q02930-3</id>
        <label>CREB5</label>
    </interactant>
    <organismsDiffer>false</organismsDiffer>
    <experiments>6</experiments>
</comment>
<comment type="interaction">
    <interactant intactId="EBI-10217483">
        <id>P60412</id>
    </interactant>
    <interactant intactId="EBI-3867333">
        <id>A8MQ03</id>
        <label>CYSRT1</label>
    </interactant>
    <organismsDiffer>false</organismsDiffer>
    <experiments>3</experiments>
</comment>
<comment type="interaction">
    <interactant intactId="EBI-10217483">
        <id>P60412</id>
    </interactant>
    <interactant intactId="EBI-751192">
        <id>Q5HYJ3</id>
        <label>FAM76B</label>
    </interactant>
    <organismsDiffer>false</organismsDiffer>
    <experiments>3</experiments>
</comment>
<comment type="interaction">
    <interactant intactId="EBI-10217483">
        <id>P60412</id>
    </interactant>
    <interactant intactId="EBI-11956087">
        <id>Q5HYJ3-3</id>
        <label>FAM76B</label>
    </interactant>
    <organismsDiffer>false</organismsDiffer>
    <experiments>3</experiments>
</comment>
<comment type="interaction">
    <interactant intactId="EBI-10217483">
        <id>P60412</id>
    </interactant>
    <interactant intactId="EBI-719816">
        <id>Q9NWN3</id>
        <label>FBXO34</label>
    </interactant>
    <organismsDiffer>false</organismsDiffer>
    <experiments>3</experiments>
</comment>
<comment type="interaction">
    <interactant intactId="EBI-10217483">
        <id>P60412</id>
    </interactant>
    <interactant intactId="EBI-374781">
        <id>O76003</id>
        <label>GLRX3</label>
    </interactant>
    <organismsDiffer>false</organismsDiffer>
    <experiments>4</experiments>
</comment>
<comment type="interaction">
    <interactant intactId="EBI-10217483">
        <id>P60412</id>
    </interactant>
    <interactant intactId="EBI-740785">
        <id>P49639</id>
        <label>HOXA1</label>
    </interactant>
    <organismsDiffer>false</organismsDiffer>
    <experiments>9</experiments>
</comment>
<comment type="interaction">
    <interactant intactId="EBI-10217483">
        <id>P60412</id>
    </interactant>
    <interactant intactId="EBI-11959885">
        <id>Q07627</id>
        <label>KRTAP1-1</label>
    </interactant>
    <organismsDiffer>false</organismsDiffer>
    <experiments>3</experiments>
</comment>
<comment type="interaction">
    <interactant intactId="EBI-10217483">
        <id>P60412</id>
    </interactant>
    <interactant intactId="EBI-11749135">
        <id>Q8IUG1</id>
        <label>KRTAP1-3</label>
    </interactant>
    <organismsDiffer>false</organismsDiffer>
    <experiments>3</experiments>
</comment>
<comment type="interaction">
    <interactant intactId="EBI-10217483">
        <id>P60412</id>
    </interactant>
    <interactant intactId="EBI-10171774">
        <id>P60410</id>
        <label>KRTAP10-8</label>
    </interactant>
    <organismsDiffer>false</organismsDiffer>
    <experiments>3</experiments>
</comment>
<comment type="interaction">
    <interactant intactId="EBI-10217483">
        <id>P60412</id>
    </interactant>
    <interactant intactId="EBI-10241252">
        <id>Q3SY46</id>
        <label>KRTAP13-3</label>
    </interactant>
    <organismsDiffer>false</organismsDiffer>
    <experiments>3</experiments>
</comment>
<comment type="interaction">
    <interactant intactId="EBI-10217483">
        <id>P60412</id>
    </interactant>
    <interactant intactId="EBI-10172511">
        <id>Q9BYR5</id>
        <label>KRTAP4-2</label>
    </interactant>
    <organismsDiffer>false</organismsDiffer>
    <experiments>3</experiments>
</comment>
<comment type="interaction">
    <interactant intactId="EBI-10217483">
        <id>P60412</id>
    </interactant>
    <interactant intactId="EBI-3958099">
        <id>P26371</id>
        <label>KRTAP5-9</label>
    </interactant>
    <organismsDiffer>false</organismsDiffer>
    <experiments>6</experiments>
</comment>
<comment type="interaction">
    <interactant intactId="EBI-10217483">
        <id>P60412</id>
    </interactant>
    <interactant intactId="EBI-1044640">
        <id>Q9BYQ4</id>
        <label>KRTAP9-2</label>
    </interactant>
    <organismsDiffer>false</organismsDiffer>
    <experiments>6</experiments>
</comment>
<comment type="interaction">
    <interactant intactId="EBI-10217483">
        <id>P60412</id>
    </interactant>
    <interactant intactId="EBI-1043191">
        <id>Q9BYQ3</id>
        <label>KRTAP9-3</label>
    </interactant>
    <organismsDiffer>false</organismsDiffer>
    <experiments>3</experiments>
</comment>
<comment type="interaction">
    <interactant intactId="EBI-10217483">
        <id>P60412</id>
    </interactant>
    <interactant intactId="EBI-10245913">
        <id>Q5T7P3</id>
        <label>LCE1B</label>
    </interactant>
    <organismsDiffer>false</organismsDiffer>
    <experiments>3</experiments>
</comment>
<comment type="interaction">
    <interactant intactId="EBI-10217483">
        <id>P60412</id>
    </interactant>
    <interactant intactId="EBI-11741311">
        <id>Q5T752</id>
        <label>LCE1D</label>
    </interactant>
    <organismsDiffer>false</organismsDiffer>
    <experiments>3</experiments>
</comment>
<comment type="interaction">
    <interactant intactId="EBI-10217483">
        <id>P60412</id>
    </interactant>
    <interactant intactId="EBI-11955335">
        <id>Q5T753</id>
        <label>LCE1E</label>
    </interactant>
    <organismsDiffer>false</organismsDiffer>
    <experiments>3</experiments>
</comment>
<comment type="interaction">
    <interactant intactId="EBI-10217483">
        <id>P60412</id>
    </interactant>
    <interactant intactId="EBI-11974495">
        <id>Q5TA77</id>
        <label>LCE3B</label>
    </interactant>
    <organismsDiffer>false</organismsDiffer>
    <experiments>3</experiments>
</comment>
<comment type="interaction">
    <interactant intactId="EBI-10217483">
        <id>P60412</id>
    </interactant>
    <interactant intactId="EBI-10245291">
        <id>Q5T5A8</id>
        <label>LCE3C</label>
    </interactant>
    <organismsDiffer>false</organismsDiffer>
    <experiments>3</experiments>
</comment>
<comment type="interaction">
    <interactant intactId="EBI-10217483">
        <id>P60412</id>
    </interactant>
    <interactant intactId="EBI-748397">
        <id>P50222</id>
        <label>MEOX2</label>
    </interactant>
    <organismsDiffer>false</organismsDiffer>
    <experiments>3</experiments>
</comment>
<comment type="interaction">
    <interactant intactId="EBI-10217483">
        <id>P60412</id>
    </interactant>
    <interactant intactId="EBI-16439278">
        <id>Q6FHY5</id>
        <label>MEOX2</label>
    </interactant>
    <organismsDiffer>false</organismsDiffer>
    <experiments>3</experiments>
</comment>
<comment type="interaction">
    <interactant intactId="EBI-10217483">
        <id>P60412</id>
    </interactant>
    <interactant intactId="EBI-12013470">
        <id>Q13875-3</id>
        <label>MOBP</label>
    </interactant>
    <organismsDiffer>false</organismsDiffer>
    <experiments>3</experiments>
</comment>
<comment type="interaction">
    <interactant intactId="EBI-10217483">
        <id>P60412</id>
    </interactant>
    <interactant intactId="EBI-945833">
        <id>Q7Z3S9</id>
        <label>NOTCH2NLA</label>
    </interactant>
    <organismsDiffer>false</organismsDiffer>
    <experiments>3</experiments>
</comment>
<comment type="interaction">
    <interactant intactId="EBI-10217483">
        <id>P60412</id>
    </interactant>
    <interactant intactId="EBI-740446">
        <id>P32242</id>
        <label>OTX1</label>
    </interactant>
    <organismsDiffer>false</organismsDiffer>
    <experiments>6</experiments>
</comment>
<comment type="interaction">
    <interactant intactId="EBI-10217483">
        <id>P60412</id>
    </interactant>
    <interactant intactId="EBI-740019">
        <id>O15162</id>
        <label>PLSCR1</label>
    </interactant>
    <organismsDiffer>false</organismsDiffer>
    <experiments>3</experiments>
</comment>
<comment type="interaction">
    <interactant intactId="EBI-10217483">
        <id>P60412</id>
    </interactant>
    <interactant intactId="EBI-17236143">
        <id>Q12837</id>
        <label>POU4F2</label>
    </interactant>
    <organismsDiffer>false</organismsDiffer>
    <experiments>3</experiments>
</comment>
<comment type="interaction">
    <interactant intactId="EBI-10217483">
        <id>P60412</id>
    </interactant>
    <interactant intactId="EBI-1053424">
        <id>O43741</id>
        <label>PRKAB2</label>
    </interactant>
    <organismsDiffer>false</organismsDiffer>
    <experiments>3</experiments>
</comment>
<comment type="interaction">
    <interactant intactId="EBI-10217483">
        <id>P60412</id>
    </interactant>
    <interactant intactId="EBI-1181439">
        <id>P54619</id>
        <label>PRKAG1</label>
    </interactant>
    <organismsDiffer>false</organismsDiffer>
    <experiments>5</experiments>
</comment>
<comment type="interaction">
    <interactant intactId="EBI-10217483">
        <id>P60412</id>
    </interactant>
    <interactant intactId="EBI-750494">
        <id>P49901</id>
        <label>SMCP</label>
    </interactant>
    <organismsDiffer>false</organismsDiffer>
    <experiments>3</experiments>
</comment>
<comment type="interaction">
    <interactant intactId="EBI-10217483">
        <id>P60412</id>
    </interactant>
    <interactant intactId="EBI-3866665">
        <id>O43609</id>
        <label>SPRY1</label>
    </interactant>
    <organismsDiffer>false</organismsDiffer>
    <experiments>3</experiments>
</comment>
<comment type="interaction">
    <interactant intactId="EBI-10217483">
        <id>P60412</id>
    </interactant>
    <interactant intactId="EBI-742487">
        <id>O43597</id>
        <label>SPRY2</label>
    </interactant>
    <organismsDiffer>false</organismsDiffer>
    <experiments>3</experiments>
</comment>
<comment type="interaction">
    <interactant intactId="EBI-10217483">
        <id>P60412</id>
    </interactant>
    <interactant intactId="EBI-11741437">
        <id>Q08117-2</id>
        <label>TLE5</label>
    </interactant>
    <organismsDiffer>false</organismsDiffer>
    <experiments>3</experiments>
</comment>
<comment type="interaction">
    <interactant intactId="EBI-10217483">
        <id>P60412</id>
    </interactant>
    <interactant intactId="EBI-6427977">
        <id>Q96SQ5</id>
        <label>ZNF587</label>
    </interactant>
    <organismsDiffer>false</organismsDiffer>
    <experiments>3</experiments>
</comment>
<comment type="tissue specificity">
    <text evidence="1 2">Restricted to a narrow region of the hair fiber cuticle, lying approximately 20 cell layers above the apex of the dermal papilla of the hair root; not detected in any other tissues.</text>
</comment>
<comment type="similarity">
    <text evidence="3">Belongs to the KRTAP type 10 family.</text>
</comment>